<sequence>MASSEGSYRDLEKKLKNGLTSISQDIVDKYGNLKVSLNVNATAKLIFDRLENLEDIAEMSTRNLSNLIDQTAKDSPEMLAEIKSQAQSCENLVEFLQSMKNVEEQLIIMRSKTTNRVEWGTAILACKDFLNDTNMLLEGIGRDGFDMSVPLKHFAAEYSVLSYNCRYQLSADYERAMNVPKLSKQKCGDRTNVSFSVFNVGSVEDQKMLNETLSAMNMIGQLPERLDAWKIVILNVFCEAIVASRDGVDVYIVDNPTPDQTRFLINQKPRGKKDKTIDVAKVLESMEVFFTKLHSVLHSHELLDATGKTFTSMIGSVIEEQLITMILKDVIAIAAPVTETADEDQEMFINLLQIGEVFVERMKELGFFSQKAKLLFTLDTDTIFVTRRCFAIVSKANKLINETYDKLVTVGVDDSAIKDIDLLAKAHTHAEHFAKEYGKDLGRLWSHNEDSQFPSFFAFQKCTVSESTINFVNLLRDNVKAAFACEDEGARAKLALTAENIVRLYVILTPRKHAELFSSIPNMAAIFYNNCHYISHCIMTMSFEASGDNQKTLLEPLLLDSVIRLRTVAADCMEKTLTRCRREMTAYLEDHSIFEHLPASYKTTKNTFAAAEEMSESADILVPREEPKIIKCLAACLLHIRLIAKNLREPLTEVVYCKVIGSLVSFLLDSLVRHVVTTSDFRENDANVMADVFKRLLEVVANIVAYKEQTKVTDFCAREYFRLNEIVFVLGNRMQDIEHRWFNAKGPMAEHLSRSEVVGLIKALFADSQHRSDLIARL</sequence>
<protein>
    <recommendedName>
        <fullName evidence="8">Centromere/kinetochore protein zw10 homolog</fullName>
    </recommendedName>
</protein>
<comment type="function">
    <text evidence="3 4 6 9">Essential component of the mitotic checkpoint, which prevents cells from prematurely exiting mitosis (PubMed:9298984). Required for the assembly of the dynein-dynactin and mdf-1-mdf-2 complexes onto kinetochores (PubMed:18936247). Its function related to the spindle assembly machinery and kinetochore-microtubule attachments likely depends on its association in the mitotic RZZ complex (PubMed:18936247). The RZZ complex recruits the spindly-like protein spdl-1 to kinetochores (PubMed:18765790, PubMed:18936247). To prevent irregular chromosome segregation, the complex also inhibits the attachment of the kinetochore-associated NDC80 complex to microtubules (PubMed:24231804). The recruitment of spdl-1 to kinetochores relieves this inhibition (PubMed:24231804). Required for embryonic development (PubMed:9298984).</text>
</comment>
<comment type="subunit">
    <text evidence="3">Component of the RZZ complex composed of rod-1, czw-1 and zwl-1.</text>
</comment>
<comment type="subcellular location">
    <subcellularLocation>
        <location evidence="3 4">Chromosome</location>
        <location evidence="3 4">Centromere</location>
        <location evidence="3 4">Kinetochore</location>
    </subcellularLocation>
    <subcellularLocation>
        <location evidence="1">Cytoplasm</location>
        <location evidence="1">Cytoskeleton</location>
        <location evidence="1">Spindle</location>
    </subcellularLocation>
    <text evidence="3">Localizes to the kinetochore during nuclear envelope breakdown and remains there until the metaphase-anaphase transition. Localization of the RZZ complex to kinetochores is dependent upon knl-1.</text>
</comment>
<comment type="disruption phenotype">
    <text evidence="3 4 5 6">RNAi-mediated knockdown largely results in sterility (PubMed:18765790, PubMed:19109417, PubMed:9298984). RNAi-mediated knockdown also results in a high incidence of embryonic lethality in the embryos produced and defects in mitosis which include the formation of chromatin bridges in between sister chromatids during anaphase (PubMed:9298984). In addition, there is reduced localization of the spindly-like protein spdl-1 to kinetochores, but not to microtubules (PubMed:18936247).</text>
</comment>
<comment type="similarity">
    <text evidence="8">Belongs to the ZW10 family.</text>
</comment>
<name>ZW10_CAEEL</name>
<proteinExistence type="evidence at protein level"/>
<organism evidence="10">
    <name type="scientific">Caenorhabditis elegans</name>
    <dbReference type="NCBI Taxonomy" id="6239"/>
    <lineage>
        <taxon>Eukaryota</taxon>
        <taxon>Metazoa</taxon>
        <taxon>Ecdysozoa</taxon>
        <taxon>Nematoda</taxon>
        <taxon>Chromadorea</taxon>
        <taxon>Rhabditida</taxon>
        <taxon>Rhabditina</taxon>
        <taxon>Rhabditomorpha</taxon>
        <taxon>Rhabditoidea</taxon>
        <taxon>Rhabditidae</taxon>
        <taxon>Peloderinae</taxon>
        <taxon>Caenorhabditis</taxon>
    </lineage>
</organism>
<feature type="chain" id="PRO_0000438725" description="Centromere/kinetochore protein zw10 homolog" evidence="8">
    <location>
        <begin position="1"/>
        <end position="778"/>
    </location>
</feature>
<feature type="coiled-coil region" evidence="2">
    <location>
        <begin position="47"/>
        <end position="99"/>
    </location>
</feature>
<gene>
    <name evidence="7 11" type="primary">czw-1</name>
    <name evidence="11" type="ORF">F20D12.4</name>
</gene>
<evidence type="ECO:0000250" key="1">
    <source>
        <dbReference type="UniProtKB" id="O43264"/>
    </source>
</evidence>
<evidence type="ECO:0000255" key="2"/>
<evidence type="ECO:0000269" key="3">
    <source>
    </source>
</evidence>
<evidence type="ECO:0000269" key="4">
    <source>
    </source>
</evidence>
<evidence type="ECO:0000269" key="5">
    <source>
    </source>
</evidence>
<evidence type="ECO:0000269" key="6">
    <source>
    </source>
</evidence>
<evidence type="ECO:0000303" key="7">
    <source>
    </source>
</evidence>
<evidence type="ECO:0000305" key="8"/>
<evidence type="ECO:0000305" key="9">
    <source>
    </source>
</evidence>
<evidence type="ECO:0000312" key="10">
    <source>
        <dbReference type="Proteomes" id="UP000001940"/>
    </source>
</evidence>
<evidence type="ECO:0000312" key="11">
    <source>
        <dbReference type="WormBase" id="F20D12.4"/>
    </source>
</evidence>
<accession>Q19642</accession>
<keyword id="KW-0131">Cell cycle</keyword>
<keyword id="KW-0132">Cell division</keyword>
<keyword id="KW-0137">Centromere</keyword>
<keyword id="KW-0158">Chromosome</keyword>
<keyword id="KW-0159">Chromosome partition</keyword>
<keyword id="KW-0175">Coiled coil</keyword>
<keyword id="KW-0963">Cytoplasm</keyword>
<keyword id="KW-0206">Cytoskeleton</keyword>
<keyword id="KW-0995">Kinetochore</keyword>
<keyword id="KW-0498">Mitosis</keyword>
<keyword id="KW-1185">Reference proteome</keyword>
<reference evidence="10" key="1">
    <citation type="journal article" date="1998" name="Science">
        <title>Genome sequence of the nematode C. elegans: a platform for investigating biology.</title>
        <authorList>
            <consortium name="The C. elegans sequencing consortium"/>
        </authorList>
    </citation>
    <scope>NUCLEOTIDE SEQUENCE [LARGE SCALE GENOMIC DNA]</scope>
    <source>
        <strain evidence="10">Bristol N2</strain>
    </source>
</reference>
<reference evidence="8" key="2">
    <citation type="journal article" date="1997" name="J. Cell Biol.">
        <title>Conservation of the centromere/kinetochore protein ZW10.</title>
        <authorList>
            <person name="Starr D.A."/>
            <person name="Williams B.C."/>
            <person name="Li Z."/>
            <person name="Etemad-Moghadam B."/>
            <person name="Dawe R.K."/>
            <person name="Goldberg M.L."/>
        </authorList>
    </citation>
    <scope>FUNCTION</scope>
    <scope>DISRUPTION PHENOTYPE</scope>
</reference>
<reference evidence="8" key="3">
    <citation type="journal article" date="2008" name="Genes Dev.">
        <title>A new mechanism controlling kinetochore-microtubule interactions revealed by comparison of two dynein-targeting components: SPDL-1 and the Rod/Zwilch/Zw10 complex.</title>
        <authorList>
            <person name="Gassmann R."/>
            <person name="Essex A."/>
            <person name="Hu J.-S."/>
            <person name="Maddox P.S."/>
            <person name="Motegi F."/>
            <person name="Sugimoto A."/>
            <person name="O'Rourke S.M."/>
            <person name="Bowerman B."/>
            <person name="McLeod I."/>
            <person name="Yates J.R. III"/>
            <person name="Oegema K."/>
            <person name="Cheeseman I.M."/>
            <person name="Desai A."/>
        </authorList>
    </citation>
    <scope>FUNCTION</scope>
    <scope>IDENTIFICATION IN RZZ COMPLEX</scope>
    <scope>SUBCELLULAR LOCATION</scope>
    <scope>DISRUPTION PHENOTYPE</scope>
</reference>
<reference evidence="8" key="4">
    <citation type="journal article" date="2008" name="J. Cell Biol.">
        <title>SPDL-1 functions as a kinetochore receptor for MDF-1 in Caenorhabditis elegans.</title>
        <authorList>
            <person name="Yamamoto T.G."/>
            <person name="Watanabe S."/>
            <person name="Essex A."/>
            <person name="Kitagawa R."/>
        </authorList>
    </citation>
    <scope>FUNCTION</scope>
    <scope>SUBCELLULAR LOCATION</scope>
    <scope>DISRUPTION PHENOTYPE</scope>
</reference>
<reference evidence="8" key="5">
    <citation type="journal article" date="2009" name="Mol. Biol. Cell">
        <title>Systematic analysis in Caenorhabditis elegans reveals that the spindle checkpoint is composed of two largely independent branches.</title>
        <authorList>
            <person name="Essex A."/>
            <person name="Dammermann A."/>
            <person name="Lewellyn L."/>
            <person name="Oegema K."/>
            <person name="Desai A."/>
        </authorList>
    </citation>
    <scope>DISRUPTION PHENOTYPE</scope>
</reference>
<reference evidence="8" key="6">
    <citation type="journal article" date="2013" name="Science">
        <title>Crosstalk between microtubule attachment complexes ensures accurate chromosome segregation.</title>
        <authorList>
            <person name="Cheerambathur D.K."/>
            <person name="Gassmann R."/>
            <person name="Cook B."/>
            <person name="Oegema K."/>
            <person name="Desai A."/>
        </authorList>
    </citation>
    <scope>FUNCTION</scope>
</reference>
<dbReference type="EMBL" id="BX284604">
    <property type="protein sequence ID" value="CCD67719.1"/>
    <property type="molecule type" value="Genomic_DNA"/>
</dbReference>
<dbReference type="PIR" id="T16111">
    <property type="entry name" value="T16111"/>
</dbReference>
<dbReference type="RefSeq" id="NP_501327.1">
    <property type="nucleotide sequence ID" value="NM_068926.7"/>
</dbReference>
<dbReference type="SMR" id="Q19642"/>
<dbReference type="ComplexPortal" id="CPX-810">
    <property type="entry name" value="RZZ complex"/>
</dbReference>
<dbReference type="FunCoup" id="Q19642">
    <property type="interactions" value="2716"/>
</dbReference>
<dbReference type="STRING" id="6239.F20D12.4.2"/>
<dbReference type="PaxDb" id="6239-F20D12.4.1"/>
<dbReference type="PeptideAtlas" id="Q19642"/>
<dbReference type="EnsemblMetazoa" id="F20D12.4.1">
    <property type="protein sequence ID" value="F20D12.4.1"/>
    <property type="gene ID" value="WBGene00017643"/>
</dbReference>
<dbReference type="EnsemblMetazoa" id="F20D12.4.2">
    <property type="protein sequence ID" value="F20D12.4.2"/>
    <property type="gene ID" value="WBGene00017643"/>
</dbReference>
<dbReference type="GeneID" id="177587"/>
<dbReference type="KEGG" id="cel:CELE_F20D12.4"/>
<dbReference type="UCSC" id="F20D12.4.1">
    <property type="organism name" value="c. elegans"/>
</dbReference>
<dbReference type="AGR" id="WB:WBGene00017643"/>
<dbReference type="CTD" id="177587"/>
<dbReference type="WormBase" id="F20D12.4">
    <property type="protein sequence ID" value="CE04434"/>
    <property type="gene ID" value="WBGene00017643"/>
    <property type="gene designation" value="czw-1"/>
</dbReference>
<dbReference type="eggNOG" id="KOG2163">
    <property type="taxonomic scope" value="Eukaryota"/>
</dbReference>
<dbReference type="GeneTree" id="ENSGT00390000016427"/>
<dbReference type="HOGENOM" id="CLU_012948_0_0_1"/>
<dbReference type="InParanoid" id="Q19642"/>
<dbReference type="OMA" id="HHLLTMG"/>
<dbReference type="OrthoDB" id="534815at2759"/>
<dbReference type="PhylomeDB" id="Q19642"/>
<dbReference type="Reactome" id="R-CEL-6811434">
    <property type="pathway name" value="COPI-dependent Golgi-to-ER retrograde traffic"/>
</dbReference>
<dbReference type="PRO" id="PR:Q19642"/>
<dbReference type="Proteomes" id="UP000001940">
    <property type="component" value="Chromosome IV"/>
</dbReference>
<dbReference type="Bgee" id="WBGene00017643">
    <property type="expression patterns" value="Expressed in germ line (C elegans) and 4 other cell types or tissues"/>
</dbReference>
<dbReference type="GO" id="GO:0005737">
    <property type="term" value="C:cytoplasm"/>
    <property type="evidence" value="ECO:0007669"/>
    <property type="project" value="UniProtKB-KW"/>
</dbReference>
<dbReference type="GO" id="GO:0000776">
    <property type="term" value="C:kinetochore"/>
    <property type="evidence" value="ECO:0000314"/>
    <property type="project" value="ComplexPortal"/>
</dbReference>
<dbReference type="GO" id="GO:0005634">
    <property type="term" value="C:nucleus"/>
    <property type="evidence" value="ECO:0007669"/>
    <property type="project" value="InterPro"/>
</dbReference>
<dbReference type="GO" id="GO:1990423">
    <property type="term" value="C:RZZ complex"/>
    <property type="evidence" value="ECO:0000314"/>
    <property type="project" value="UniProtKB"/>
</dbReference>
<dbReference type="GO" id="GO:0005819">
    <property type="term" value="C:spindle"/>
    <property type="evidence" value="ECO:0007669"/>
    <property type="project" value="UniProtKB-SubCell"/>
</dbReference>
<dbReference type="GO" id="GO:0051301">
    <property type="term" value="P:cell division"/>
    <property type="evidence" value="ECO:0007669"/>
    <property type="project" value="UniProtKB-KW"/>
</dbReference>
<dbReference type="GO" id="GO:0007059">
    <property type="term" value="P:chromosome segregation"/>
    <property type="evidence" value="ECO:0007669"/>
    <property type="project" value="UniProtKB-KW"/>
</dbReference>
<dbReference type="GO" id="GO:0006888">
    <property type="term" value="P:endoplasmic reticulum to Golgi vesicle-mediated transport"/>
    <property type="evidence" value="ECO:0000318"/>
    <property type="project" value="GO_Central"/>
</dbReference>
<dbReference type="GO" id="GO:0007094">
    <property type="term" value="P:mitotic spindle assembly checkpoint signaling"/>
    <property type="evidence" value="ECO:0000318"/>
    <property type="project" value="GO_Central"/>
</dbReference>
<dbReference type="GO" id="GO:0034501">
    <property type="term" value="P:protein localization to kinetochore"/>
    <property type="evidence" value="ECO:0000314"/>
    <property type="project" value="ComplexPortal"/>
</dbReference>
<dbReference type="GO" id="GO:0051988">
    <property type="term" value="P:regulation of attachment of spindle microtubules to kinetochore"/>
    <property type="evidence" value="ECO:0000303"/>
    <property type="project" value="ComplexPortal"/>
</dbReference>
<dbReference type="Gene3D" id="1.10.357.150">
    <property type="match status" value="1"/>
</dbReference>
<dbReference type="InterPro" id="IPR046362">
    <property type="entry name" value="Zw10/DSL1_C_sf"/>
</dbReference>
<dbReference type="InterPro" id="IPR048343">
    <property type="entry name" value="ZW10_C"/>
</dbReference>
<dbReference type="InterPro" id="IPR055148">
    <property type="entry name" value="ZW10_C_2"/>
</dbReference>
<dbReference type="InterPro" id="IPR048344">
    <property type="entry name" value="Zw10_middle"/>
</dbReference>
<dbReference type="InterPro" id="IPR009361">
    <property type="entry name" value="Zw10_N"/>
</dbReference>
<dbReference type="PANTHER" id="PTHR12205">
    <property type="entry name" value="CENTROMERE/KINETOCHORE PROTEIN ZW10"/>
    <property type="match status" value="1"/>
</dbReference>
<dbReference type="PANTHER" id="PTHR12205:SF0">
    <property type="entry name" value="CENTROMERE_KINETOCHORE PROTEIN ZW10 HOMOLOG"/>
    <property type="match status" value="1"/>
</dbReference>
<dbReference type="Pfam" id="PF20666">
    <property type="entry name" value="ZW10_C"/>
    <property type="match status" value="1"/>
</dbReference>
<dbReference type="Pfam" id="PF22766">
    <property type="entry name" value="ZW10_C2"/>
    <property type="match status" value="1"/>
</dbReference>
<dbReference type="Pfam" id="PF20665">
    <property type="entry name" value="Zw10_middle"/>
    <property type="match status" value="1"/>
</dbReference>
<dbReference type="Pfam" id="PF06248">
    <property type="entry name" value="Zw10_N"/>
    <property type="match status" value="1"/>
</dbReference>